<protein>
    <recommendedName>
        <fullName evidence="1">ATP synthase subunit a</fullName>
    </recommendedName>
    <alternativeName>
        <fullName evidence="1">ATP synthase F0 sector subunit a</fullName>
    </alternativeName>
    <alternativeName>
        <fullName evidence="1">F-ATPase subunit 6</fullName>
    </alternativeName>
</protein>
<gene>
    <name evidence="1" type="primary">atpB</name>
    <name type="ordered locus">Pput_5301</name>
</gene>
<name>ATP6_PSEP1</name>
<accession>A5WBA9</accession>
<sequence length="289" mass="31699">MAAETASGYIQHHLQNLTYGQLPDGSWGFAHSAAEAKAMGFWAFHLDTLGWSVALGLIFLLIFRMAAKKATSGQPGGLQNFVEVMVDFVNGSVKDSFHGRSPVIAPLALTIFVWVFLMNAVDLVPVDWIPQLAILISGDPHIPFRAVSTTDPNATLAMAFCVFALIIFYSIKVKGLGGFIGELTLHPFGSKNIFVQILLIPVNFLLEFVTLIAKPISLALRLFGNMYAGELVFILIAVMFGSGLLWLSGLGVVLQWAWAVFHILIITLQAFIFMMLTIVYLSMAHEDNH</sequence>
<proteinExistence type="inferred from homology"/>
<organism>
    <name type="scientific">Pseudomonas putida (strain ATCC 700007 / DSM 6899 / JCM 31910 / BCRC 17059 / LMG 24140 / F1)</name>
    <dbReference type="NCBI Taxonomy" id="351746"/>
    <lineage>
        <taxon>Bacteria</taxon>
        <taxon>Pseudomonadati</taxon>
        <taxon>Pseudomonadota</taxon>
        <taxon>Gammaproteobacteria</taxon>
        <taxon>Pseudomonadales</taxon>
        <taxon>Pseudomonadaceae</taxon>
        <taxon>Pseudomonas</taxon>
    </lineage>
</organism>
<reference key="1">
    <citation type="submission" date="2007-05" db="EMBL/GenBank/DDBJ databases">
        <title>Complete sequence of Pseudomonas putida F1.</title>
        <authorList>
            <consortium name="US DOE Joint Genome Institute"/>
            <person name="Copeland A."/>
            <person name="Lucas S."/>
            <person name="Lapidus A."/>
            <person name="Barry K."/>
            <person name="Detter J.C."/>
            <person name="Glavina del Rio T."/>
            <person name="Hammon N."/>
            <person name="Israni S."/>
            <person name="Dalin E."/>
            <person name="Tice H."/>
            <person name="Pitluck S."/>
            <person name="Chain P."/>
            <person name="Malfatti S."/>
            <person name="Shin M."/>
            <person name="Vergez L."/>
            <person name="Schmutz J."/>
            <person name="Larimer F."/>
            <person name="Land M."/>
            <person name="Hauser L."/>
            <person name="Kyrpides N."/>
            <person name="Lykidis A."/>
            <person name="Parales R."/>
            <person name="Richardson P."/>
        </authorList>
    </citation>
    <scope>NUCLEOTIDE SEQUENCE [LARGE SCALE GENOMIC DNA]</scope>
    <source>
        <strain>ATCC 700007 / DSM 6899 / JCM 31910 / BCRC 17059 / LMG 24140 / F1</strain>
    </source>
</reference>
<comment type="function">
    <text evidence="1">Key component of the proton channel; it plays a direct role in the translocation of protons across the membrane.</text>
</comment>
<comment type="subunit">
    <text evidence="1">F-type ATPases have 2 components, CF(1) - the catalytic core - and CF(0) - the membrane proton channel. CF(1) has five subunits: alpha(3), beta(3), gamma(1), delta(1), epsilon(1). CF(0) has three main subunits: a(1), b(2) and c(9-12). The alpha and beta chains form an alternating ring which encloses part of the gamma chain. CF(1) is attached to CF(0) by a central stalk formed by the gamma and epsilon chains, while a peripheral stalk is formed by the delta and b chains.</text>
</comment>
<comment type="subcellular location">
    <subcellularLocation>
        <location evidence="1">Cell inner membrane</location>
        <topology evidence="1">Multi-pass membrane protein</topology>
    </subcellularLocation>
</comment>
<comment type="similarity">
    <text evidence="1">Belongs to the ATPase A chain family.</text>
</comment>
<feature type="chain" id="PRO_0000362396" description="ATP synthase subunit a">
    <location>
        <begin position="1"/>
        <end position="289"/>
    </location>
</feature>
<feature type="transmembrane region" description="Helical" evidence="1">
    <location>
        <begin position="43"/>
        <end position="63"/>
    </location>
</feature>
<feature type="transmembrane region" description="Helical" evidence="1">
    <location>
        <begin position="103"/>
        <end position="123"/>
    </location>
</feature>
<feature type="transmembrane region" description="Helical" evidence="1">
    <location>
        <begin position="160"/>
        <end position="180"/>
    </location>
</feature>
<feature type="transmembrane region" description="Helical" evidence="1">
    <location>
        <begin position="193"/>
        <end position="213"/>
    </location>
</feature>
<feature type="transmembrane region" description="Helical" evidence="1">
    <location>
        <begin position="232"/>
        <end position="252"/>
    </location>
</feature>
<feature type="transmembrane region" description="Helical" evidence="1">
    <location>
        <begin position="259"/>
        <end position="279"/>
    </location>
</feature>
<keyword id="KW-0066">ATP synthesis</keyword>
<keyword id="KW-0997">Cell inner membrane</keyword>
<keyword id="KW-1003">Cell membrane</keyword>
<keyword id="KW-0138">CF(0)</keyword>
<keyword id="KW-0375">Hydrogen ion transport</keyword>
<keyword id="KW-0406">Ion transport</keyword>
<keyword id="KW-0472">Membrane</keyword>
<keyword id="KW-0812">Transmembrane</keyword>
<keyword id="KW-1133">Transmembrane helix</keyword>
<keyword id="KW-0813">Transport</keyword>
<dbReference type="EMBL" id="CP000712">
    <property type="protein sequence ID" value="ABQ81419.1"/>
    <property type="molecule type" value="Genomic_DNA"/>
</dbReference>
<dbReference type="SMR" id="A5WBA9"/>
<dbReference type="KEGG" id="ppf:Pput_5301"/>
<dbReference type="eggNOG" id="COG0356">
    <property type="taxonomic scope" value="Bacteria"/>
</dbReference>
<dbReference type="HOGENOM" id="CLU_041018_1_0_6"/>
<dbReference type="GO" id="GO:0005886">
    <property type="term" value="C:plasma membrane"/>
    <property type="evidence" value="ECO:0007669"/>
    <property type="project" value="UniProtKB-SubCell"/>
</dbReference>
<dbReference type="GO" id="GO:0045259">
    <property type="term" value="C:proton-transporting ATP synthase complex"/>
    <property type="evidence" value="ECO:0007669"/>
    <property type="project" value="UniProtKB-KW"/>
</dbReference>
<dbReference type="GO" id="GO:0046933">
    <property type="term" value="F:proton-transporting ATP synthase activity, rotational mechanism"/>
    <property type="evidence" value="ECO:0007669"/>
    <property type="project" value="UniProtKB-UniRule"/>
</dbReference>
<dbReference type="GO" id="GO:0042777">
    <property type="term" value="P:proton motive force-driven plasma membrane ATP synthesis"/>
    <property type="evidence" value="ECO:0007669"/>
    <property type="project" value="TreeGrafter"/>
</dbReference>
<dbReference type="CDD" id="cd00310">
    <property type="entry name" value="ATP-synt_Fo_a_6"/>
    <property type="match status" value="1"/>
</dbReference>
<dbReference type="FunFam" id="1.20.120.220:FF:000002">
    <property type="entry name" value="ATP synthase subunit a"/>
    <property type="match status" value="1"/>
</dbReference>
<dbReference type="Gene3D" id="1.20.120.220">
    <property type="entry name" value="ATP synthase, F0 complex, subunit A"/>
    <property type="match status" value="1"/>
</dbReference>
<dbReference type="HAMAP" id="MF_01393">
    <property type="entry name" value="ATP_synth_a_bact"/>
    <property type="match status" value="1"/>
</dbReference>
<dbReference type="InterPro" id="IPR045082">
    <property type="entry name" value="ATP_syn_F0_a_bact/chloroplast"/>
</dbReference>
<dbReference type="InterPro" id="IPR000568">
    <property type="entry name" value="ATP_synth_F0_asu"/>
</dbReference>
<dbReference type="InterPro" id="IPR023011">
    <property type="entry name" value="ATP_synth_F0_asu_AS"/>
</dbReference>
<dbReference type="InterPro" id="IPR035908">
    <property type="entry name" value="F0_ATP_A_sf"/>
</dbReference>
<dbReference type="NCBIfam" id="TIGR01131">
    <property type="entry name" value="ATP_synt_6_or_A"/>
    <property type="match status" value="1"/>
</dbReference>
<dbReference type="NCBIfam" id="NF004477">
    <property type="entry name" value="PRK05815.1-1"/>
    <property type="match status" value="1"/>
</dbReference>
<dbReference type="PANTHER" id="PTHR42823">
    <property type="entry name" value="ATP SYNTHASE SUBUNIT A, CHLOROPLASTIC"/>
    <property type="match status" value="1"/>
</dbReference>
<dbReference type="PANTHER" id="PTHR42823:SF3">
    <property type="entry name" value="ATP SYNTHASE SUBUNIT A, CHLOROPLASTIC"/>
    <property type="match status" value="1"/>
</dbReference>
<dbReference type="Pfam" id="PF00119">
    <property type="entry name" value="ATP-synt_A"/>
    <property type="match status" value="1"/>
</dbReference>
<dbReference type="SUPFAM" id="SSF81336">
    <property type="entry name" value="F1F0 ATP synthase subunit A"/>
    <property type="match status" value="1"/>
</dbReference>
<dbReference type="PROSITE" id="PS00449">
    <property type="entry name" value="ATPASE_A"/>
    <property type="match status" value="1"/>
</dbReference>
<evidence type="ECO:0000255" key="1">
    <source>
        <dbReference type="HAMAP-Rule" id="MF_01393"/>
    </source>
</evidence>